<name>FDHD_ANASK</name>
<reference key="1">
    <citation type="submission" date="2008-08" db="EMBL/GenBank/DDBJ databases">
        <title>Complete sequence of Anaeromyxobacter sp. K.</title>
        <authorList>
            <consortium name="US DOE Joint Genome Institute"/>
            <person name="Lucas S."/>
            <person name="Copeland A."/>
            <person name="Lapidus A."/>
            <person name="Glavina del Rio T."/>
            <person name="Dalin E."/>
            <person name="Tice H."/>
            <person name="Bruce D."/>
            <person name="Goodwin L."/>
            <person name="Pitluck S."/>
            <person name="Saunders E."/>
            <person name="Brettin T."/>
            <person name="Detter J.C."/>
            <person name="Han C."/>
            <person name="Larimer F."/>
            <person name="Land M."/>
            <person name="Hauser L."/>
            <person name="Kyrpides N."/>
            <person name="Ovchinnikiva G."/>
            <person name="Beliaev A."/>
        </authorList>
    </citation>
    <scope>NUCLEOTIDE SEQUENCE [LARGE SCALE GENOMIC DNA]</scope>
    <source>
        <strain>K</strain>
    </source>
</reference>
<comment type="function">
    <text evidence="1">Required for formate dehydrogenase (FDH) activity. Acts as a sulfur carrier protein that transfers sulfur from IscS to the molybdenum cofactor prior to its insertion into FDH.</text>
</comment>
<comment type="subcellular location">
    <subcellularLocation>
        <location evidence="1">Cytoplasm</location>
    </subcellularLocation>
</comment>
<comment type="similarity">
    <text evidence="1">Belongs to the FdhD family.</text>
</comment>
<organism>
    <name type="scientific">Anaeromyxobacter sp. (strain K)</name>
    <dbReference type="NCBI Taxonomy" id="447217"/>
    <lineage>
        <taxon>Bacteria</taxon>
        <taxon>Pseudomonadati</taxon>
        <taxon>Myxococcota</taxon>
        <taxon>Myxococcia</taxon>
        <taxon>Myxococcales</taxon>
        <taxon>Cystobacterineae</taxon>
        <taxon>Anaeromyxobacteraceae</taxon>
        <taxon>Anaeromyxobacter</taxon>
    </lineage>
</organism>
<sequence length="288" mass="29360">METSLRRAAAPAGAVAERTVLRNGGTVRDAVAVEEPLEIRVDGDRLATTMRTPGADGDLALGFLFAEGIISGVEDVGTVIHCGRPGEEGYGNVMDVRSAAGMRIDPERILEGRRFVPVSAACGVCGRLSIDHLMERIRTLPAGEPVAPALVAAGMEILARSQPVFERTGGLHAAVLVGRDGAPIASAEDVGRHNAVDKVVGAALRAGRVGPRAAAGPAPALLAVSGRAGFEIVQKAAAAGVPVIASVSAPSSLAVDLARAAGVTLCGFVRGERMNVYANGERLGLTGP</sequence>
<gene>
    <name evidence="1" type="primary">fdhD</name>
    <name type="ordered locus">AnaeK_0873</name>
</gene>
<evidence type="ECO:0000255" key="1">
    <source>
        <dbReference type="HAMAP-Rule" id="MF_00187"/>
    </source>
</evidence>
<accession>B4UEZ9</accession>
<dbReference type="EMBL" id="CP001131">
    <property type="protein sequence ID" value="ACG72109.1"/>
    <property type="molecule type" value="Genomic_DNA"/>
</dbReference>
<dbReference type="RefSeq" id="WP_012524936.1">
    <property type="nucleotide sequence ID" value="NC_011145.1"/>
</dbReference>
<dbReference type="SMR" id="B4UEZ9"/>
<dbReference type="KEGG" id="ank:AnaeK_0873"/>
<dbReference type="HOGENOM" id="CLU_056887_3_0_7"/>
<dbReference type="OrthoDB" id="3197277at2"/>
<dbReference type="Proteomes" id="UP000001871">
    <property type="component" value="Chromosome"/>
</dbReference>
<dbReference type="GO" id="GO:0005737">
    <property type="term" value="C:cytoplasm"/>
    <property type="evidence" value="ECO:0007669"/>
    <property type="project" value="UniProtKB-SubCell"/>
</dbReference>
<dbReference type="GO" id="GO:0097163">
    <property type="term" value="F:sulfur carrier activity"/>
    <property type="evidence" value="ECO:0007669"/>
    <property type="project" value="UniProtKB-UniRule"/>
</dbReference>
<dbReference type="GO" id="GO:0016783">
    <property type="term" value="F:sulfurtransferase activity"/>
    <property type="evidence" value="ECO:0007669"/>
    <property type="project" value="InterPro"/>
</dbReference>
<dbReference type="GO" id="GO:0006777">
    <property type="term" value="P:Mo-molybdopterin cofactor biosynthetic process"/>
    <property type="evidence" value="ECO:0007669"/>
    <property type="project" value="UniProtKB-UniRule"/>
</dbReference>
<dbReference type="Gene3D" id="3.10.20.10">
    <property type="match status" value="1"/>
</dbReference>
<dbReference type="Gene3D" id="3.40.140.10">
    <property type="entry name" value="Cytidine Deaminase, domain 2"/>
    <property type="match status" value="1"/>
</dbReference>
<dbReference type="HAMAP" id="MF_00187">
    <property type="entry name" value="FdhD"/>
    <property type="match status" value="1"/>
</dbReference>
<dbReference type="InterPro" id="IPR016193">
    <property type="entry name" value="Cytidine_deaminase-like"/>
</dbReference>
<dbReference type="InterPro" id="IPR003786">
    <property type="entry name" value="FdhD"/>
</dbReference>
<dbReference type="NCBIfam" id="TIGR00129">
    <property type="entry name" value="fdhD_narQ"/>
    <property type="match status" value="1"/>
</dbReference>
<dbReference type="NCBIfam" id="NF001943">
    <property type="entry name" value="PRK00724.1-2"/>
    <property type="match status" value="1"/>
</dbReference>
<dbReference type="PANTHER" id="PTHR30592">
    <property type="entry name" value="FORMATE DEHYDROGENASE"/>
    <property type="match status" value="1"/>
</dbReference>
<dbReference type="PANTHER" id="PTHR30592:SF1">
    <property type="entry name" value="SULFUR CARRIER PROTEIN FDHD"/>
    <property type="match status" value="1"/>
</dbReference>
<dbReference type="Pfam" id="PF02634">
    <property type="entry name" value="FdhD-NarQ"/>
    <property type="match status" value="1"/>
</dbReference>
<dbReference type="PIRSF" id="PIRSF015626">
    <property type="entry name" value="FdhD"/>
    <property type="match status" value="1"/>
</dbReference>
<dbReference type="SUPFAM" id="SSF53927">
    <property type="entry name" value="Cytidine deaminase-like"/>
    <property type="match status" value="1"/>
</dbReference>
<feature type="chain" id="PRO_1000098778" description="Sulfur carrier protein FdhD">
    <location>
        <begin position="1"/>
        <end position="288"/>
    </location>
</feature>
<feature type="active site" description="Cysteine persulfide intermediate" evidence="1">
    <location>
        <position position="122"/>
    </location>
</feature>
<feature type="binding site" evidence="1">
    <location>
        <begin position="268"/>
        <end position="273"/>
    </location>
    <ligand>
        <name>Mo-bis(molybdopterin guanine dinucleotide)</name>
        <dbReference type="ChEBI" id="CHEBI:60539"/>
    </ligand>
</feature>
<protein>
    <recommendedName>
        <fullName evidence="1">Sulfur carrier protein FdhD</fullName>
    </recommendedName>
</protein>
<proteinExistence type="inferred from homology"/>
<keyword id="KW-0963">Cytoplasm</keyword>
<keyword id="KW-0501">Molybdenum cofactor biosynthesis</keyword>